<name>SL9A_ECHCA</name>
<comment type="function">
    <text evidence="3">Anticoagulant protein which binds to coagulation factor IX (F9) and coagulation factor X (F10) in the presence of calcium. It may bind the gamma-carboxyglutamic acid-domain regions of factors with a 1 to 1 stoichiometry. The dissociation constant (K(d)) are 6.6 nM for factor IX (F9) and 125 nM for factor X (F10). Does not bind carbohydrates.</text>
</comment>
<comment type="subunit">
    <text evidence="3">Heterodimer of subunits A and B; disulfide-linked.</text>
</comment>
<comment type="subcellular location">
    <subcellularLocation>
        <location evidence="3">Secreted</location>
    </subcellularLocation>
</comment>
<comment type="tissue specificity">
    <text evidence="3">Expressed by the venom gland.</text>
</comment>
<comment type="similarity">
    <text evidence="4">Belongs to the snaclec family.</text>
</comment>
<evidence type="ECO:0000250" key="1"/>
<evidence type="ECO:0000255" key="2">
    <source>
        <dbReference type="PROSITE-ProRule" id="PRU00040"/>
    </source>
</evidence>
<evidence type="ECO:0000269" key="3">
    <source>
    </source>
</evidence>
<evidence type="ECO:0000305" key="4"/>
<accession>Q9PSM9</accession>
<dbReference type="SMR" id="Q9PSM9"/>
<dbReference type="GO" id="GO:0005576">
    <property type="term" value="C:extracellular region"/>
    <property type="evidence" value="ECO:0007669"/>
    <property type="project" value="UniProtKB-SubCell"/>
</dbReference>
<dbReference type="GO" id="GO:0046872">
    <property type="term" value="F:metal ion binding"/>
    <property type="evidence" value="ECO:0007669"/>
    <property type="project" value="UniProtKB-KW"/>
</dbReference>
<dbReference type="GO" id="GO:0090729">
    <property type="term" value="F:toxin activity"/>
    <property type="evidence" value="ECO:0007669"/>
    <property type="project" value="UniProtKB-KW"/>
</dbReference>
<dbReference type="FunFam" id="3.10.100.10:FF:000087">
    <property type="entry name" value="Snaclec rhodocetin subunit delta"/>
    <property type="match status" value="1"/>
</dbReference>
<dbReference type="Gene3D" id="3.10.100.10">
    <property type="entry name" value="Mannose-Binding Protein A, subunit A"/>
    <property type="match status" value="1"/>
</dbReference>
<dbReference type="InterPro" id="IPR001304">
    <property type="entry name" value="C-type_lectin-like"/>
</dbReference>
<dbReference type="InterPro" id="IPR016186">
    <property type="entry name" value="C-type_lectin-like/link_sf"/>
</dbReference>
<dbReference type="InterPro" id="IPR050111">
    <property type="entry name" value="C-type_lectin/snaclec_domain"/>
</dbReference>
<dbReference type="InterPro" id="IPR018378">
    <property type="entry name" value="C-type_lectin_CS"/>
</dbReference>
<dbReference type="InterPro" id="IPR016187">
    <property type="entry name" value="CTDL_fold"/>
</dbReference>
<dbReference type="PANTHER" id="PTHR22803">
    <property type="entry name" value="MANNOSE, PHOSPHOLIPASE, LECTIN RECEPTOR RELATED"/>
    <property type="match status" value="1"/>
</dbReference>
<dbReference type="Pfam" id="PF00059">
    <property type="entry name" value="Lectin_C"/>
    <property type="match status" value="1"/>
</dbReference>
<dbReference type="SMART" id="SM00034">
    <property type="entry name" value="CLECT"/>
    <property type="match status" value="1"/>
</dbReference>
<dbReference type="SUPFAM" id="SSF56436">
    <property type="entry name" value="C-type lectin-like"/>
    <property type="match status" value="1"/>
</dbReference>
<dbReference type="PROSITE" id="PS00615">
    <property type="entry name" value="C_TYPE_LECTIN_1"/>
    <property type="match status" value="1"/>
</dbReference>
<dbReference type="PROSITE" id="PS50041">
    <property type="entry name" value="C_TYPE_LECTIN_2"/>
    <property type="match status" value="1"/>
</dbReference>
<feature type="chain" id="PRO_0000415605" description="Snaclec coagulation factor IX/factor X-binding protein subunit A">
    <location>
        <begin position="1"/>
        <end position="131"/>
    </location>
</feature>
<feature type="domain" description="C-type lectin" evidence="2">
    <location>
        <begin position="1"/>
        <end position="131"/>
    </location>
</feature>
<feature type="binding site" evidence="1">
    <location>
        <position position="41"/>
    </location>
    <ligand>
        <name>Ca(2+)</name>
        <dbReference type="ChEBI" id="CHEBI:29108"/>
    </ligand>
</feature>
<feature type="binding site" evidence="1">
    <location>
        <position position="43"/>
    </location>
    <ligand>
        <name>Ca(2+)</name>
        <dbReference type="ChEBI" id="CHEBI:29108"/>
    </ligand>
</feature>
<feature type="binding site" evidence="1">
    <location>
        <position position="47"/>
    </location>
    <ligand>
        <name>Ca(2+)</name>
        <dbReference type="ChEBI" id="CHEBI:29108"/>
    </ligand>
</feature>
<feature type="binding site" evidence="1">
    <location>
        <position position="130"/>
    </location>
    <ligand>
        <name>Ca(2+)</name>
        <dbReference type="ChEBI" id="CHEBI:29108"/>
    </ligand>
</feature>
<feature type="disulfide bond" evidence="2 3">
    <location>
        <begin position="2"/>
        <end position="13"/>
    </location>
</feature>
<feature type="disulfide bond" evidence="2 3">
    <location>
        <begin position="30"/>
        <end position="129"/>
    </location>
</feature>
<feature type="disulfide bond" description="Interchain (with C-75 in subunit B)" evidence="2 3">
    <location>
        <position position="81"/>
    </location>
</feature>
<feature type="disulfide bond" evidence="2 3">
    <location>
        <begin position="104"/>
        <end position="121"/>
    </location>
</feature>
<sequence>DCLPGWSSHEGHCYKVFNEYKTWKDAEKFCKKQGKSGHLVSVESSEEGDFVAKLISENLEKSHSIDFVWTGLTYKGRWKQCSSEWSDGSKIKYQKWGKQQPRKCLGLEKQTEFRKWVNLYCEEPQRFTCEI</sequence>
<organism>
    <name type="scientific">Echis carinatus</name>
    <name type="common">Saw-scaled viper</name>
    <dbReference type="NCBI Taxonomy" id="40353"/>
    <lineage>
        <taxon>Eukaryota</taxon>
        <taxon>Metazoa</taxon>
        <taxon>Chordata</taxon>
        <taxon>Craniata</taxon>
        <taxon>Vertebrata</taxon>
        <taxon>Euteleostomi</taxon>
        <taxon>Lepidosauria</taxon>
        <taxon>Squamata</taxon>
        <taxon>Bifurcata</taxon>
        <taxon>Unidentata</taxon>
        <taxon>Episquamata</taxon>
        <taxon>Toxicofera</taxon>
        <taxon>Serpentes</taxon>
        <taxon>Colubroidea</taxon>
        <taxon>Viperidae</taxon>
        <taxon>Viperinae</taxon>
        <taxon>Echis</taxon>
    </lineage>
</organism>
<protein>
    <recommendedName>
        <fullName>Snaclec coagulation factor IX/factor X-binding protein subunit A</fullName>
        <shortName>IX/X-BP subunit A</shortName>
    </recommendedName>
    <alternativeName>
        <fullName>ECLV IX/X-BP subunit A</fullName>
    </alternativeName>
</protein>
<reference key="1">
    <citation type="journal article" date="1996" name="Biochemistry">
        <title>Functional and sequence characterization of coagulation factor IX/factor X-binding protein from the venom of Echis carinatus leucogaster.</title>
        <authorList>
            <person name="Chen Y.L."/>
            <person name="Tsai I.H."/>
        </authorList>
    </citation>
    <scope>PROTEIN SEQUENCE</scope>
    <scope>FUNCTION</scope>
    <scope>DISULFIDE BONDS</scope>
    <scope>SUBUNIT</scope>
    <scope>SUBCELLULAR LOCATION</scope>
    <scope>TISSUE SPECIFICITY</scope>
    <source>
        <tissue>Venom</tissue>
    </source>
</reference>
<keyword id="KW-1203">Blood coagulation cascade inhibiting toxin</keyword>
<keyword id="KW-0106">Calcium</keyword>
<keyword id="KW-0903">Direct protein sequencing</keyword>
<keyword id="KW-1015">Disulfide bond</keyword>
<keyword id="KW-1199">Hemostasis impairing toxin</keyword>
<keyword id="KW-0479">Metal-binding</keyword>
<keyword id="KW-0964">Secreted</keyword>
<keyword id="KW-0800">Toxin</keyword>
<proteinExistence type="evidence at protein level"/>